<sequence length="909" mass="104944">MTDVVSDFDHVYNIIRNNYNLNYYLNCADRSNNVCTIKYLQERKSYFCCAVDESTGRCVLHRCVLIVFGTWLDKKFRKKEFSGGDATCGGGGGDGDQDQDAIDERSNIKGTFMIDGRFLSFPNVMMNNNILMHNFYDKLYSKNCKRMFLYGNVDEEKRINRAIQLVYDDHEDVLFARDVYAKDYVVSENLNETLETYLRSSGKWEPLNFLFDFDKNQTDKMFDRIKMIMRAEINYSIDSLSNKIIYKHAYLTHLLYRPVLKMYQASKIDSAAAVSESNGSLRKLGGNQSGAMYPKDCKKIVDTIVNGKLIHVISKTFSKQKKNFLNHQDNSSNNNIEMCPPMIKYRVGNEVVRIINDNMRQDMLKQEYDFVKFVDSFFHGEMTVAGKKFFLCRDVRLPNVDYESIAKKFKDLIESNLIVRRDEDENGSGGDDDDDEWLMIAFNNRPTTFSCKRKHLVRIVYEFKRKRFPVEIKLSKSILFVNHHEGMICIRKQVRINEKVNISALLTPYEYHNVESIIGQIGARIVDVDHVSALMSKTLQYYYRSHLHIFATIPVPKLIVSVTNLKNAMPVIEYDDVEWNENRDMFIRNLPVGNSVVASPGSVHNNKMINLWTLVRDSRLMTAEDPYIPNVTLPVKLFNNKVNRLKGKMVYASKSKTPLVKFFKSESNNFVDTNEGHVLAMAGVIVSNVKINWTHDGKRYKIETCKNKSFYIFKIYTFLRKIRSQRIELIDAKLSTLNDFVYVKFSIVTSTNNLDGIKICGIHGQKGVMNSSEDLTEWMAEDGTHAQICLSPVSFLSRQSNFDYIERKYVVRGGDHTDPSAVRYPMFRIPYMLFNNTPEILQRIPQTNYTGHEKIEGTRLDQWSINQSFAGNRWAEGLQCVRGGTNLPDSSGEYKVLTSLLHCNNVIVN</sequence>
<evidence type="ECO:0000305" key="1"/>
<organismHost>
    <name type="scientific">Lepidoptera</name>
    <name type="common">butterflies and moths</name>
    <dbReference type="NCBI Taxonomy" id="7088"/>
</organismHost>
<accession>O57030</accession>
<gene>
    <name type="primary">LEF-8</name>
</gene>
<comment type="function">
    <text>Required for late and very late gene expression. May be a component of the novel RNA polymerase activity induced by baculovirus infection.</text>
</comment>
<comment type="catalytic activity">
    <reaction>
        <text>RNA(n) + a ribonucleoside 5'-triphosphate = RNA(n+1) + diphosphate</text>
        <dbReference type="Rhea" id="RHEA:21248"/>
        <dbReference type="Rhea" id="RHEA-COMP:14527"/>
        <dbReference type="Rhea" id="RHEA-COMP:17342"/>
        <dbReference type="ChEBI" id="CHEBI:33019"/>
        <dbReference type="ChEBI" id="CHEBI:61557"/>
        <dbReference type="ChEBI" id="CHEBI:140395"/>
        <dbReference type="EC" id="2.7.7.6"/>
    </reaction>
</comment>
<comment type="similarity">
    <text evidence="1">Belongs to the RNA polymerase beta chain family.</text>
</comment>
<dbReference type="EC" id="2.7.7.6"/>
<dbReference type="EMBL" id="Y10669">
    <property type="protein sequence ID" value="CAA71676.1"/>
    <property type="molecule type" value="Genomic_DNA"/>
</dbReference>
<dbReference type="GO" id="GO:0000428">
    <property type="term" value="C:DNA-directed RNA polymerase complex"/>
    <property type="evidence" value="ECO:0007669"/>
    <property type="project" value="UniProtKB-KW"/>
</dbReference>
<dbReference type="GO" id="GO:0003677">
    <property type="term" value="F:DNA binding"/>
    <property type="evidence" value="ECO:0007669"/>
    <property type="project" value="InterPro"/>
</dbReference>
<dbReference type="GO" id="GO:0003899">
    <property type="term" value="F:DNA-directed RNA polymerase activity"/>
    <property type="evidence" value="ECO:0007669"/>
    <property type="project" value="UniProtKB-EC"/>
</dbReference>
<dbReference type="GO" id="GO:0006351">
    <property type="term" value="P:DNA-templated transcription"/>
    <property type="evidence" value="ECO:0007669"/>
    <property type="project" value="InterPro"/>
</dbReference>
<dbReference type="Gene3D" id="2.40.270.10">
    <property type="entry name" value="DNA-directed RNA polymerase, subunit 2, domain 6"/>
    <property type="match status" value="1"/>
</dbReference>
<dbReference type="InterPro" id="IPR037033">
    <property type="entry name" value="DNA-dir_RNAP_su2_hyb_sf"/>
</dbReference>
<dbReference type="InterPro" id="IPR007025">
    <property type="entry name" value="LEF-8"/>
</dbReference>
<dbReference type="InterPro" id="IPR007121">
    <property type="entry name" value="RNA_pol_bsu_CS"/>
</dbReference>
<dbReference type="Pfam" id="PF04941">
    <property type="entry name" value="LEF-8"/>
    <property type="match status" value="2"/>
</dbReference>
<dbReference type="PROSITE" id="PS01166">
    <property type="entry name" value="RNA_POL_BETA"/>
    <property type="match status" value="1"/>
</dbReference>
<organism>
    <name type="scientific">Spodoptera littoralis nuclear polyhedrosis virus</name>
    <name type="common">SlNPV</name>
    <dbReference type="NCBI Taxonomy" id="10456"/>
    <lineage>
        <taxon>Viruses</taxon>
        <taxon>Viruses incertae sedis</taxon>
        <taxon>Naldaviricetes</taxon>
        <taxon>Lefavirales</taxon>
        <taxon>Baculoviridae</taxon>
        <taxon>Alphabaculovirus</taxon>
        <taxon>Alphabaculovirus splittoralis</taxon>
    </lineage>
</organism>
<name>RPOB_NPVSL</name>
<proteinExistence type="inferred from homology"/>
<feature type="chain" id="PRO_0000048055" description="Probable DNA-directed RNA polymerase subunit beta">
    <location>
        <begin position="1"/>
        <end position="909"/>
    </location>
</feature>
<protein>
    <recommendedName>
        <fullName>Probable DNA-directed RNA polymerase subunit beta</fullName>
        <ecNumber>2.7.7.6</ecNumber>
    </recommendedName>
    <alternativeName>
        <fullName>Late expression factor 8</fullName>
    </alternativeName>
</protein>
<reference key="1">
    <citation type="journal article" date="1997" name="Virus Genes">
        <title>Genomic localization and nucleotide sequence of a lef-8-like gene of the Spodoptera littoralis nucleopolyhedrovirus.</title>
        <authorList>
            <person name="Faktor O."/>
            <person name="Kamesnky B."/>
        </authorList>
    </citation>
    <scope>NUCLEOTIDE SEQUENCE [GENOMIC DNA]</scope>
    <source>
        <strain>Isolate E15</strain>
    </source>
</reference>
<keyword id="KW-0240">DNA-directed RNA polymerase</keyword>
<keyword id="KW-0548">Nucleotidyltransferase</keyword>
<keyword id="KW-0804">Transcription</keyword>
<keyword id="KW-0808">Transferase</keyword>